<dbReference type="EMBL" id="CP000675">
    <property type="protein sequence ID" value="ABQ55458.1"/>
    <property type="molecule type" value="Genomic_DNA"/>
</dbReference>
<dbReference type="RefSeq" id="WP_011946925.1">
    <property type="nucleotide sequence ID" value="NZ_JAPMSS010000011.1"/>
</dbReference>
<dbReference type="SMR" id="A5IDK8"/>
<dbReference type="KEGG" id="lpc:LPC_1509"/>
<dbReference type="HOGENOM" id="CLU_005965_2_1_6"/>
<dbReference type="GO" id="GO:0005524">
    <property type="term" value="F:ATP binding"/>
    <property type="evidence" value="ECO:0007669"/>
    <property type="project" value="UniProtKB-UniRule"/>
</dbReference>
<dbReference type="GO" id="GO:0140662">
    <property type="term" value="F:ATP-dependent protein folding chaperone"/>
    <property type="evidence" value="ECO:0007669"/>
    <property type="project" value="InterPro"/>
</dbReference>
<dbReference type="GO" id="GO:0051082">
    <property type="term" value="F:unfolded protein binding"/>
    <property type="evidence" value="ECO:0007669"/>
    <property type="project" value="InterPro"/>
</dbReference>
<dbReference type="CDD" id="cd10234">
    <property type="entry name" value="ASKHA_NBD_HSP70_DnaK-like"/>
    <property type="match status" value="1"/>
</dbReference>
<dbReference type="FunFam" id="2.60.34.10:FF:000014">
    <property type="entry name" value="Chaperone protein DnaK HSP70"/>
    <property type="match status" value="1"/>
</dbReference>
<dbReference type="FunFam" id="1.20.1270.10:FF:000001">
    <property type="entry name" value="Molecular chaperone DnaK"/>
    <property type="match status" value="1"/>
</dbReference>
<dbReference type="FunFam" id="3.30.420.40:FF:000004">
    <property type="entry name" value="Molecular chaperone DnaK"/>
    <property type="match status" value="1"/>
</dbReference>
<dbReference type="FunFam" id="3.90.640.10:FF:000003">
    <property type="entry name" value="Molecular chaperone DnaK"/>
    <property type="match status" value="1"/>
</dbReference>
<dbReference type="Gene3D" id="1.20.1270.10">
    <property type="match status" value="1"/>
</dbReference>
<dbReference type="Gene3D" id="3.30.420.40">
    <property type="match status" value="2"/>
</dbReference>
<dbReference type="Gene3D" id="3.90.640.10">
    <property type="entry name" value="Actin, Chain A, domain 4"/>
    <property type="match status" value="1"/>
</dbReference>
<dbReference type="Gene3D" id="2.60.34.10">
    <property type="entry name" value="Substrate Binding Domain Of DNAk, Chain A, domain 1"/>
    <property type="match status" value="1"/>
</dbReference>
<dbReference type="HAMAP" id="MF_00332">
    <property type="entry name" value="DnaK"/>
    <property type="match status" value="1"/>
</dbReference>
<dbReference type="InterPro" id="IPR043129">
    <property type="entry name" value="ATPase_NBD"/>
</dbReference>
<dbReference type="InterPro" id="IPR012725">
    <property type="entry name" value="Chaperone_DnaK"/>
</dbReference>
<dbReference type="InterPro" id="IPR018181">
    <property type="entry name" value="Heat_shock_70_CS"/>
</dbReference>
<dbReference type="InterPro" id="IPR029048">
    <property type="entry name" value="HSP70_C_sf"/>
</dbReference>
<dbReference type="InterPro" id="IPR029047">
    <property type="entry name" value="HSP70_peptide-bd_sf"/>
</dbReference>
<dbReference type="InterPro" id="IPR013126">
    <property type="entry name" value="Hsp_70_fam"/>
</dbReference>
<dbReference type="NCBIfam" id="NF001413">
    <property type="entry name" value="PRK00290.1"/>
    <property type="match status" value="1"/>
</dbReference>
<dbReference type="NCBIfam" id="NF003520">
    <property type="entry name" value="PRK05183.1"/>
    <property type="match status" value="1"/>
</dbReference>
<dbReference type="NCBIfam" id="TIGR02350">
    <property type="entry name" value="prok_dnaK"/>
    <property type="match status" value="1"/>
</dbReference>
<dbReference type="PANTHER" id="PTHR19375">
    <property type="entry name" value="HEAT SHOCK PROTEIN 70KDA"/>
    <property type="match status" value="1"/>
</dbReference>
<dbReference type="Pfam" id="PF00012">
    <property type="entry name" value="HSP70"/>
    <property type="match status" value="1"/>
</dbReference>
<dbReference type="PRINTS" id="PR00301">
    <property type="entry name" value="HEATSHOCK70"/>
</dbReference>
<dbReference type="SUPFAM" id="SSF53067">
    <property type="entry name" value="Actin-like ATPase domain"/>
    <property type="match status" value="2"/>
</dbReference>
<dbReference type="SUPFAM" id="SSF100934">
    <property type="entry name" value="Heat shock protein 70kD (HSP70), C-terminal subdomain"/>
    <property type="match status" value="1"/>
</dbReference>
<dbReference type="SUPFAM" id="SSF100920">
    <property type="entry name" value="Heat shock protein 70kD (HSP70), peptide-binding domain"/>
    <property type="match status" value="1"/>
</dbReference>
<dbReference type="PROSITE" id="PS00297">
    <property type="entry name" value="HSP70_1"/>
    <property type="match status" value="1"/>
</dbReference>
<dbReference type="PROSITE" id="PS00329">
    <property type="entry name" value="HSP70_2"/>
    <property type="match status" value="1"/>
</dbReference>
<dbReference type="PROSITE" id="PS01036">
    <property type="entry name" value="HSP70_3"/>
    <property type="match status" value="1"/>
</dbReference>
<reference key="1">
    <citation type="submission" date="2006-11" db="EMBL/GenBank/DDBJ databases">
        <title>Identification and characterization of a new conjugation/ type IVA secretion system (trb/tra) of L. pneumophila Corby localized on a mobile genomic island.</title>
        <authorList>
            <person name="Gloeckner G."/>
            <person name="Albert-Weissenberger C."/>
            <person name="Weinmann E."/>
            <person name="Jacobi S."/>
            <person name="Schunder E."/>
            <person name="Steinert M."/>
            <person name="Buchrieser C."/>
            <person name="Hacker J."/>
            <person name="Heuner K."/>
        </authorList>
    </citation>
    <scope>NUCLEOTIDE SEQUENCE [LARGE SCALE GENOMIC DNA]</scope>
    <source>
        <strain>Corby</strain>
    </source>
</reference>
<keyword id="KW-0067">ATP-binding</keyword>
<keyword id="KW-0143">Chaperone</keyword>
<keyword id="KW-0547">Nucleotide-binding</keyword>
<keyword id="KW-0597">Phosphoprotein</keyword>
<keyword id="KW-0346">Stress response</keyword>
<protein>
    <recommendedName>
        <fullName evidence="1">Chaperone protein DnaK</fullName>
    </recommendedName>
    <alternativeName>
        <fullName evidence="1">HSP70</fullName>
    </alternativeName>
    <alternativeName>
        <fullName evidence="1">Heat shock 70 kDa protein</fullName>
    </alternativeName>
    <alternativeName>
        <fullName evidence="1">Heat shock protein 70</fullName>
    </alternativeName>
</protein>
<gene>
    <name evidence="1" type="primary">dnaK</name>
    <name type="ordered locus">LPC_1509</name>
</gene>
<comment type="function">
    <text evidence="1">Acts as a chaperone.</text>
</comment>
<comment type="induction">
    <text evidence="1">By stress conditions e.g. heat shock.</text>
</comment>
<comment type="similarity">
    <text evidence="1">Belongs to the heat shock protein 70 family.</text>
</comment>
<evidence type="ECO:0000255" key="1">
    <source>
        <dbReference type="HAMAP-Rule" id="MF_00332"/>
    </source>
</evidence>
<evidence type="ECO:0000256" key="2">
    <source>
        <dbReference type="SAM" id="MobiDB-lite"/>
    </source>
</evidence>
<sequence length="644" mass="70059">MAKIIGIDLGTTNSCVAVMEGDKPKVIENSEGHRTTPSIVAFTDDNEILVGQSAKRQSVTNPEKTLFAIKRLIGRRFDDPIVQKDIKMVPYKIMKADNGDAWVRVKDQDKAPPQISAEVLRKMKKTAEDYLGEEVKEAVITVPAYFNDSQRQATKDAGRIAGLEVKRIINEPTAAALAYGMDKKRGDSVIAVYDLGGGTFDISIIEIAEVDGEHQFEVLATNGDTFLGGEDFDLALIEYLASEFKKDTGIDLHNDPLALQRLKEAAEKAKIELSSAQQTDVNLPYITADASGPKHLNIKLTRAKLESLVEKLVERTIEPCKTALKDAGLTVSQINEVILVGGQTRMPLVQKTVEEFFGKEPRKDVNPDEAVAVGAAIQAAVLSGEVKDILLLDVTPLSLGIETMGGVMTKLIEKNTTIPTKATQVFSTADDNQTAVTVHVLQGEREQASANKSLGRFDLRDIPPAPRGVPQIEVTFDIDANGILNVSAKDKATGKAQSIVIKASSGLSEEEVAAMVKDAQSHAEEDKKFKEMAELRNQADSLIHSCEKSMKDLADELSEDEKKGIETAISELKEAVQGTDKARIEDKLKVLTDASAKMAERIYAKKSSEGQAAQGQTQSQESTKPAEEGVVDAEFEEVKEEDKK</sequence>
<proteinExistence type="inferred from homology"/>
<name>DNAK_LEGPC</name>
<organism>
    <name type="scientific">Legionella pneumophila (strain Corby)</name>
    <dbReference type="NCBI Taxonomy" id="400673"/>
    <lineage>
        <taxon>Bacteria</taxon>
        <taxon>Pseudomonadati</taxon>
        <taxon>Pseudomonadota</taxon>
        <taxon>Gammaproteobacteria</taxon>
        <taxon>Legionellales</taxon>
        <taxon>Legionellaceae</taxon>
        <taxon>Legionella</taxon>
    </lineage>
</organism>
<feature type="chain" id="PRO_1000059593" description="Chaperone protein DnaK">
    <location>
        <begin position="1"/>
        <end position="644"/>
    </location>
</feature>
<feature type="region of interest" description="Disordered" evidence="2">
    <location>
        <begin position="603"/>
        <end position="644"/>
    </location>
</feature>
<feature type="compositionally biased region" description="Polar residues" evidence="2">
    <location>
        <begin position="609"/>
        <end position="623"/>
    </location>
</feature>
<feature type="compositionally biased region" description="Acidic residues" evidence="2">
    <location>
        <begin position="629"/>
        <end position="644"/>
    </location>
</feature>
<feature type="modified residue" description="Phosphothreonine; by autocatalysis" evidence="1">
    <location>
        <position position="199"/>
    </location>
</feature>
<accession>A5IDK8</accession>